<evidence type="ECO:0000250" key="1"/>
<evidence type="ECO:0000255" key="2"/>
<evidence type="ECO:0000269" key="3">
    <source>
    </source>
</evidence>
<evidence type="ECO:0000305" key="4"/>
<accession>Q8SRK2</accession>
<keyword id="KW-1003">Cell membrane</keyword>
<keyword id="KW-0472">Membrane</keyword>
<keyword id="KW-1185">Reference proteome</keyword>
<keyword id="KW-0677">Repeat</keyword>
<keyword id="KW-0812">Transmembrane</keyword>
<keyword id="KW-1133">Transmembrane helix</keyword>
<keyword id="KW-0813">Transport</keyword>
<sequence length="250" mass="26795">MTRETLKTLQSTFGEMVASFVFGFAVYSALLGSALTEQSAARVIVGLTVGFSGICVIYSFCDVTVAHFNPAITLAAILTCKLGVLRGIGYIVAQYIGFILAVCALLPCSPVGYKETLNIIRPTPSPFGGDNLNVFFTEFFLTAILVHVAFATAVNPYKPKTDTEGKFVDPDEEEPVDRRITAPLCIGLTLGFLAFLGLASSGGAFNPGLTLAPVIMSNTWNHFWAYFAGQYLGGFVGGLLQVLVLYKLSF</sequence>
<proteinExistence type="inferred from homology"/>
<name>AQP_ENCCU</name>
<protein>
    <recommendedName>
        <fullName>Aquaporin</fullName>
    </recommendedName>
</protein>
<dbReference type="EMBL" id="AL590447">
    <property type="protein sequence ID" value="CAD25606.1"/>
    <property type="molecule type" value="Genomic_DNA"/>
</dbReference>
<dbReference type="RefSeq" id="NP_586002.1">
    <property type="nucleotide sequence ID" value="NM_001041624.1"/>
</dbReference>
<dbReference type="SMR" id="Q8SRK2"/>
<dbReference type="STRING" id="284813.Q8SRK2"/>
<dbReference type="TCDB" id="1.A.8.10.17">
    <property type="family name" value="the major intrinsic protein (mip) family"/>
</dbReference>
<dbReference type="GeneID" id="859431"/>
<dbReference type="KEGG" id="ecu:ECU07_0740"/>
<dbReference type="VEuPathDB" id="MicrosporidiaDB:ECU07_0740"/>
<dbReference type="HOGENOM" id="CLU_020019_3_4_1"/>
<dbReference type="InParanoid" id="Q8SRK2"/>
<dbReference type="OMA" id="RAFLYWI"/>
<dbReference type="OrthoDB" id="3222at2759"/>
<dbReference type="Proteomes" id="UP000000819">
    <property type="component" value="Chromosome VII"/>
</dbReference>
<dbReference type="GO" id="GO:0005886">
    <property type="term" value="C:plasma membrane"/>
    <property type="evidence" value="ECO:0007669"/>
    <property type="project" value="UniProtKB-SubCell"/>
</dbReference>
<dbReference type="GO" id="GO:0015250">
    <property type="term" value="F:water channel activity"/>
    <property type="evidence" value="ECO:0007669"/>
    <property type="project" value="TreeGrafter"/>
</dbReference>
<dbReference type="CDD" id="cd00333">
    <property type="entry name" value="MIP"/>
    <property type="match status" value="1"/>
</dbReference>
<dbReference type="Gene3D" id="1.20.1080.10">
    <property type="entry name" value="Glycerol uptake facilitator protein"/>
    <property type="match status" value="1"/>
</dbReference>
<dbReference type="InterPro" id="IPR023271">
    <property type="entry name" value="Aquaporin-like"/>
</dbReference>
<dbReference type="InterPro" id="IPR034294">
    <property type="entry name" value="Aquaporin_transptr"/>
</dbReference>
<dbReference type="InterPro" id="IPR000425">
    <property type="entry name" value="MIP"/>
</dbReference>
<dbReference type="InterPro" id="IPR022357">
    <property type="entry name" value="MIP_CS"/>
</dbReference>
<dbReference type="PANTHER" id="PTHR19139">
    <property type="entry name" value="AQUAPORIN TRANSPORTER"/>
    <property type="match status" value="1"/>
</dbReference>
<dbReference type="PANTHER" id="PTHR19139:SF199">
    <property type="entry name" value="MIP17260P"/>
    <property type="match status" value="1"/>
</dbReference>
<dbReference type="Pfam" id="PF00230">
    <property type="entry name" value="MIP"/>
    <property type="match status" value="1"/>
</dbReference>
<dbReference type="PRINTS" id="PR00783">
    <property type="entry name" value="MINTRINSICP"/>
</dbReference>
<dbReference type="SUPFAM" id="SSF81338">
    <property type="entry name" value="Aquaporin-like"/>
    <property type="match status" value="1"/>
</dbReference>
<dbReference type="PROSITE" id="PS00221">
    <property type="entry name" value="MIP"/>
    <property type="match status" value="1"/>
</dbReference>
<feature type="chain" id="PRO_0000385184" description="Aquaporin">
    <location>
        <begin position="1"/>
        <end position="250"/>
    </location>
</feature>
<feature type="topological domain" description="Cytoplasmic" evidence="2">
    <location>
        <begin position="1"/>
        <end position="15"/>
    </location>
</feature>
<feature type="transmembrane region" description="Helical" evidence="2">
    <location>
        <begin position="16"/>
        <end position="36"/>
    </location>
</feature>
<feature type="topological domain" description="Extracellular" evidence="2">
    <location>
        <begin position="37"/>
        <end position="42"/>
    </location>
</feature>
<feature type="transmembrane region" description="Helical" evidence="2">
    <location>
        <begin position="43"/>
        <end position="63"/>
    </location>
</feature>
<feature type="topological domain" description="Cytoplasmic" evidence="2">
    <location>
        <begin position="64"/>
        <end position="86"/>
    </location>
</feature>
<feature type="transmembrane region" description="Helical" evidence="2">
    <location>
        <begin position="87"/>
        <end position="107"/>
    </location>
</feature>
<feature type="topological domain" description="Extracellular" evidence="2">
    <location>
        <begin position="108"/>
        <end position="133"/>
    </location>
</feature>
<feature type="transmembrane region" description="Helical" evidence="2">
    <location>
        <begin position="134"/>
        <end position="154"/>
    </location>
</feature>
<feature type="topological domain" description="Cytoplasmic" evidence="2">
    <location>
        <begin position="155"/>
        <end position="179"/>
    </location>
</feature>
<feature type="transmembrane region" description="Helical" evidence="2">
    <location>
        <begin position="180"/>
        <end position="200"/>
    </location>
</feature>
<feature type="topological domain" description="Extracellular" evidence="2">
    <location>
        <begin position="201"/>
        <end position="224"/>
    </location>
</feature>
<feature type="transmembrane region" description="Helical" evidence="2">
    <location>
        <begin position="225"/>
        <end position="245"/>
    </location>
</feature>
<feature type="topological domain" description="Cytoplasmic" evidence="2">
    <location>
        <begin position="246"/>
        <end position="250"/>
    </location>
</feature>
<feature type="short sequence motif" description="NPA">
    <location>
        <begin position="69"/>
        <end position="71"/>
    </location>
</feature>
<feature type="short sequence motif" description="NPG">
    <location>
        <begin position="206"/>
        <end position="208"/>
    </location>
</feature>
<gene>
    <name type="primary">AQP</name>
    <name type="ordered locus">ECU07_0740</name>
</gene>
<reference key="1">
    <citation type="journal article" date="2001" name="Nature">
        <title>Genome sequence and gene compaction of the eukaryote parasite Encephalitozoon cuniculi.</title>
        <authorList>
            <person name="Katinka M.D."/>
            <person name="Duprat S."/>
            <person name="Cornillot E."/>
            <person name="Metenier G."/>
            <person name="Thomarat F."/>
            <person name="Prensier G."/>
            <person name="Barbe V."/>
            <person name="Peyretaillade E."/>
            <person name="Brottier P."/>
            <person name="Wincker P."/>
            <person name="Delbac F."/>
            <person name="El Alaoui H."/>
            <person name="Peyret P."/>
            <person name="Saurin W."/>
            <person name="Gouy M."/>
            <person name="Weissenbach J."/>
            <person name="Vivares C.P."/>
        </authorList>
    </citation>
    <scope>NUCLEOTIDE SEQUENCE [LARGE SCALE GENOMIC DNA]</scope>
    <source>
        <strain>GB-M1</strain>
    </source>
</reference>
<reference key="2">
    <citation type="journal article" date="2006" name="Int. J. Parasitol.">
        <title>Functional characterization of a putative aquaporin from Encephalitozoon cuniculi, a microsporidia pathogenic to humans.</title>
        <authorList>
            <person name="Ghosh K."/>
            <person name="Cappiello C.D."/>
            <person name="McBride S.M."/>
            <person name="Occi J.L."/>
            <person name="Cali A."/>
            <person name="Takvorian P.M."/>
            <person name="McDonald T.V."/>
            <person name="Weiss L.M."/>
        </authorList>
    </citation>
    <scope>FUNCTION</scope>
</reference>
<organism>
    <name type="scientific">Encephalitozoon cuniculi (strain GB-M1)</name>
    <name type="common">Microsporidian parasite</name>
    <dbReference type="NCBI Taxonomy" id="284813"/>
    <lineage>
        <taxon>Eukaryota</taxon>
        <taxon>Fungi</taxon>
        <taxon>Fungi incertae sedis</taxon>
        <taxon>Microsporidia</taxon>
        <taxon>Unikaryonidae</taxon>
        <taxon>Encephalitozoon</taxon>
    </lineage>
</organism>
<comment type="function">
    <text evidence="3">Water channel required to facilitate the transport of water across membranes. Involved in osmotolerance.</text>
</comment>
<comment type="subcellular location">
    <subcellularLocation>
        <location evidence="1">Cell membrane</location>
        <topology evidence="1">Multi-pass membrane protein</topology>
    </subcellularLocation>
</comment>
<comment type="domain">
    <text>Aquaporins contain two tandem repeats each containing three membrane-spanning domains and a pore-forming loop with the signature motif Asn-Pro-Ala (NPA). In microsporidia, the second signature motif differs slightly and is Asn-Pro-Gly (NPG).</text>
</comment>
<comment type="similarity">
    <text evidence="4">Belongs to the MIP/aquaporin (TC 1.A.8) family.</text>
</comment>